<feature type="chain" id="PRO_0000158509" description="Ribose-5-phosphate isomerase A">
    <location>
        <begin position="1"/>
        <end position="234"/>
    </location>
</feature>
<feature type="active site" description="Proton acceptor" evidence="1">
    <location>
        <position position="112"/>
    </location>
</feature>
<feature type="binding site" evidence="1">
    <location>
        <begin position="34"/>
        <end position="37"/>
    </location>
    <ligand>
        <name>substrate</name>
    </ligand>
</feature>
<feature type="binding site" evidence="1">
    <location>
        <begin position="90"/>
        <end position="93"/>
    </location>
    <ligand>
        <name>substrate</name>
    </ligand>
</feature>
<feature type="binding site" evidence="1">
    <location>
        <begin position="103"/>
        <end position="106"/>
    </location>
    <ligand>
        <name>substrate</name>
    </ligand>
</feature>
<feature type="binding site" evidence="1">
    <location>
        <position position="130"/>
    </location>
    <ligand>
        <name>substrate</name>
    </ligand>
</feature>
<protein>
    <recommendedName>
        <fullName evidence="1">Ribose-5-phosphate isomerase A</fullName>
        <ecNumber evidence="1">5.3.1.6</ecNumber>
    </recommendedName>
    <alternativeName>
        <fullName evidence="1">Phosphoriboisomerase A</fullName>
        <shortName evidence="1">PRI</shortName>
    </alternativeName>
</protein>
<organism>
    <name type="scientific">Methanosarcina acetivorans (strain ATCC 35395 / DSM 2834 / JCM 12185 / C2A)</name>
    <dbReference type="NCBI Taxonomy" id="188937"/>
    <lineage>
        <taxon>Archaea</taxon>
        <taxon>Methanobacteriati</taxon>
        <taxon>Methanobacteriota</taxon>
        <taxon>Stenosarchaea group</taxon>
        <taxon>Methanomicrobia</taxon>
        <taxon>Methanosarcinales</taxon>
        <taxon>Methanosarcinaceae</taxon>
        <taxon>Methanosarcina</taxon>
    </lineage>
</organism>
<gene>
    <name evidence="1" type="primary">rpiA</name>
    <name type="ordered locus">MA_1683</name>
</gene>
<sequence>MTERNTSTDSPEKRAAGIAAAGLVSSGMLVGLGTGSTVAYTIKELGRRVREEGLDILGVVTSYQSEMLAIEAGIRLTTLAQHPELDLAIDGADQIDSELRAIKGGGAAHTREKIVSVSARRFVVVADESKTSKQLDKLVPVEVLPFAKEPVVKKIRELGGKPQLRSAVKKDGPVITDNGNFVLDVEFGVIKDPEALALQLSSIPGVVEHGIFCNVSELYIGNKDGAIKIITRQK</sequence>
<proteinExistence type="inferred from homology"/>
<keyword id="KW-0413">Isomerase</keyword>
<keyword id="KW-1185">Reference proteome</keyword>
<name>RPIA_METAC</name>
<accession>Q8TQ69</accession>
<evidence type="ECO:0000255" key="1">
    <source>
        <dbReference type="HAMAP-Rule" id="MF_00170"/>
    </source>
</evidence>
<reference key="1">
    <citation type="journal article" date="2002" name="Genome Res.">
        <title>The genome of Methanosarcina acetivorans reveals extensive metabolic and physiological diversity.</title>
        <authorList>
            <person name="Galagan J.E."/>
            <person name="Nusbaum C."/>
            <person name="Roy A."/>
            <person name="Endrizzi M.G."/>
            <person name="Macdonald P."/>
            <person name="FitzHugh W."/>
            <person name="Calvo S."/>
            <person name="Engels R."/>
            <person name="Smirnov S."/>
            <person name="Atnoor D."/>
            <person name="Brown A."/>
            <person name="Allen N."/>
            <person name="Naylor J."/>
            <person name="Stange-Thomann N."/>
            <person name="DeArellano K."/>
            <person name="Johnson R."/>
            <person name="Linton L."/>
            <person name="McEwan P."/>
            <person name="McKernan K."/>
            <person name="Talamas J."/>
            <person name="Tirrell A."/>
            <person name="Ye W."/>
            <person name="Zimmer A."/>
            <person name="Barber R.D."/>
            <person name="Cann I."/>
            <person name="Graham D.E."/>
            <person name="Grahame D.A."/>
            <person name="Guss A.M."/>
            <person name="Hedderich R."/>
            <person name="Ingram-Smith C."/>
            <person name="Kuettner H.C."/>
            <person name="Krzycki J.A."/>
            <person name="Leigh J.A."/>
            <person name="Li W."/>
            <person name="Liu J."/>
            <person name="Mukhopadhyay B."/>
            <person name="Reeve J.N."/>
            <person name="Smith K."/>
            <person name="Springer T.A."/>
            <person name="Umayam L.A."/>
            <person name="White O."/>
            <person name="White R.H."/>
            <person name="de Macario E.C."/>
            <person name="Ferry J.G."/>
            <person name="Jarrell K.F."/>
            <person name="Jing H."/>
            <person name="Macario A.J.L."/>
            <person name="Paulsen I.T."/>
            <person name="Pritchett M."/>
            <person name="Sowers K.R."/>
            <person name="Swanson R.V."/>
            <person name="Zinder S.H."/>
            <person name="Lander E."/>
            <person name="Metcalf W.W."/>
            <person name="Birren B."/>
        </authorList>
    </citation>
    <scope>NUCLEOTIDE SEQUENCE [LARGE SCALE GENOMIC DNA]</scope>
    <source>
        <strain>ATCC 35395 / DSM 2834 / JCM 12185 / C2A</strain>
    </source>
</reference>
<dbReference type="EC" id="5.3.1.6" evidence="1"/>
<dbReference type="EMBL" id="AE010299">
    <property type="protein sequence ID" value="AAM05090.1"/>
    <property type="molecule type" value="Genomic_DNA"/>
</dbReference>
<dbReference type="RefSeq" id="WP_011021687.1">
    <property type="nucleotide sequence ID" value="NC_003552.1"/>
</dbReference>
<dbReference type="SMR" id="Q8TQ69"/>
<dbReference type="FunCoup" id="Q8TQ69">
    <property type="interactions" value="271"/>
</dbReference>
<dbReference type="STRING" id="188937.MA_1683"/>
<dbReference type="EnsemblBacteria" id="AAM05090">
    <property type="protein sequence ID" value="AAM05090"/>
    <property type="gene ID" value="MA_1683"/>
</dbReference>
<dbReference type="GeneID" id="1473571"/>
<dbReference type="KEGG" id="mac:MA_1683"/>
<dbReference type="HOGENOM" id="CLU_056590_0_2_2"/>
<dbReference type="InParanoid" id="Q8TQ69"/>
<dbReference type="OrthoDB" id="19013at2157"/>
<dbReference type="PhylomeDB" id="Q8TQ69"/>
<dbReference type="UniPathway" id="UPA00115">
    <property type="reaction ID" value="UER00412"/>
</dbReference>
<dbReference type="Proteomes" id="UP000002487">
    <property type="component" value="Chromosome"/>
</dbReference>
<dbReference type="GO" id="GO:0005829">
    <property type="term" value="C:cytosol"/>
    <property type="evidence" value="ECO:0000318"/>
    <property type="project" value="GO_Central"/>
</dbReference>
<dbReference type="GO" id="GO:0004751">
    <property type="term" value="F:ribose-5-phosphate isomerase activity"/>
    <property type="evidence" value="ECO:0000318"/>
    <property type="project" value="GO_Central"/>
</dbReference>
<dbReference type="GO" id="GO:0006014">
    <property type="term" value="P:D-ribose metabolic process"/>
    <property type="evidence" value="ECO:0000318"/>
    <property type="project" value="GO_Central"/>
</dbReference>
<dbReference type="GO" id="GO:0009052">
    <property type="term" value="P:pentose-phosphate shunt, non-oxidative branch"/>
    <property type="evidence" value="ECO:0000318"/>
    <property type="project" value="GO_Central"/>
</dbReference>
<dbReference type="CDD" id="cd01398">
    <property type="entry name" value="RPI_A"/>
    <property type="match status" value="1"/>
</dbReference>
<dbReference type="FunFam" id="3.30.70.260:FF:000018">
    <property type="entry name" value="Ribose-5-phosphate isomerase A"/>
    <property type="match status" value="1"/>
</dbReference>
<dbReference type="FunFam" id="3.40.50.1360:FF:000001">
    <property type="entry name" value="Ribose-5-phosphate isomerase A"/>
    <property type="match status" value="1"/>
</dbReference>
<dbReference type="Gene3D" id="3.30.70.260">
    <property type="match status" value="1"/>
</dbReference>
<dbReference type="Gene3D" id="3.40.50.1360">
    <property type="match status" value="1"/>
</dbReference>
<dbReference type="HAMAP" id="MF_00170">
    <property type="entry name" value="Rib_5P_isom_A"/>
    <property type="match status" value="1"/>
</dbReference>
<dbReference type="InterPro" id="IPR037171">
    <property type="entry name" value="NagB/RpiA_transferase-like"/>
</dbReference>
<dbReference type="InterPro" id="IPR020672">
    <property type="entry name" value="Ribose5P_isomerase_typA_subgr"/>
</dbReference>
<dbReference type="InterPro" id="IPR004788">
    <property type="entry name" value="Ribose5P_isomerase_type_A"/>
</dbReference>
<dbReference type="NCBIfam" id="NF001924">
    <property type="entry name" value="PRK00702.1"/>
    <property type="match status" value="1"/>
</dbReference>
<dbReference type="NCBIfam" id="TIGR00021">
    <property type="entry name" value="rpiA"/>
    <property type="match status" value="1"/>
</dbReference>
<dbReference type="PANTHER" id="PTHR11934">
    <property type="entry name" value="RIBOSE-5-PHOSPHATE ISOMERASE"/>
    <property type="match status" value="1"/>
</dbReference>
<dbReference type="PANTHER" id="PTHR11934:SF0">
    <property type="entry name" value="RIBOSE-5-PHOSPHATE ISOMERASE"/>
    <property type="match status" value="1"/>
</dbReference>
<dbReference type="Pfam" id="PF06026">
    <property type="entry name" value="Rib_5-P_isom_A"/>
    <property type="match status" value="1"/>
</dbReference>
<dbReference type="SUPFAM" id="SSF75445">
    <property type="entry name" value="D-ribose-5-phosphate isomerase (RpiA), lid domain"/>
    <property type="match status" value="1"/>
</dbReference>
<dbReference type="SUPFAM" id="SSF100950">
    <property type="entry name" value="NagB/RpiA/CoA transferase-like"/>
    <property type="match status" value="1"/>
</dbReference>
<comment type="function">
    <text evidence="1">Catalyzes the reversible conversion of ribose-5-phosphate to ribulose 5-phosphate.</text>
</comment>
<comment type="catalytic activity">
    <reaction evidence="1">
        <text>aldehydo-D-ribose 5-phosphate = D-ribulose 5-phosphate</text>
        <dbReference type="Rhea" id="RHEA:14657"/>
        <dbReference type="ChEBI" id="CHEBI:58121"/>
        <dbReference type="ChEBI" id="CHEBI:58273"/>
        <dbReference type="EC" id="5.3.1.6"/>
    </reaction>
</comment>
<comment type="pathway">
    <text evidence="1">Carbohydrate degradation; pentose phosphate pathway; D-ribose 5-phosphate from D-ribulose 5-phosphate (non-oxidative stage): step 1/1.</text>
</comment>
<comment type="subunit">
    <text evidence="1">Homodimer.</text>
</comment>
<comment type="similarity">
    <text evidence="1">Belongs to the ribose 5-phosphate isomerase family.</text>
</comment>